<protein>
    <recommendedName>
        <fullName>Annetocin</fullName>
    </recommendedName>
</protein>
<comment type="function">
    <text>Potentiates spontaneous contractions of the gut and also pulsatory contractions and bladder-shaking movement of the nephridia. May be involved in osmoregulation of the animal through nephridial function.</text>
</comment>
<comment type="subcellular location">
    <subcellularLocation>
        <location>Secreted</location>
    </subcellularLocation>
</comment>
<comment type="similarity">
    <text evidence="2">Belongs to the vasopressin/oxytocin family.</text>
</comment>
<sequence length="9" mass="996">CFVRNCPTG</sequence>
<keyword id="KW-0027">Amidation</keyword>
<keyword id="KW-0903">Direct protein sequencing</keyword>
<keyword id="KW-1015">Disulfide bond</keyword>
<keyword id="KW-0372">Hormone</keyword>
<keyword id="KW-0964">Secreted</keyword>
<evidence type="ECO:0000269" key="1">
    <source>
    </source>
</evidence>
<evidence type="ECO:0000305" key="2"/>
<proteinExistence type="evidence at protein level"/>
<organism>
    <name type="scientific">Eisenia fetida</name>
    <name type="common">Red wiggler worm</name>
    <dbReference type="NCBI Taxonomy" id="6396"/>
    <lineage>
        <taxon>Eukaryota</taxon>
        <taxon>Metazoa</taxon>
        <taxon>Spiralia</taxon>
        <taxon>Lophotrochozoa</taxon>
        <taxon>Annelida</taxon>
        <taxon>Clitellata</taxon>
        <taxon>Oligochaeta</taxon>
        <taxon>Crassiclitellata</taxon>
        <taxon>Lumbricina</taxon>
        <taxon>Lumbricidae</taxon>
        <taxon>Lumbricinae</taxon>
        <taxon>Eisenia</taxon>
    </lineage>
</organism>
<reference key="1">
    <citation type="journal article" date="1994" name="Biochem. Biophys. Res. Commun.">
        <title>Annetocin: an oxytocin-related peptide isolated from the earthworm, Eisenia foetida.</title>
        <authorList>
            <person name="Oumi T."/>
            <person name="Ukena K."/>
            <person name="Matsushima O."/>
            <person name="Ikeda T."/>
            <person name="Fujita T."/>
            <person name="Minakata H."/>
            <person name="Nomoto K."/>
        </authorList>
    </citation>
    <scope>PROTEIN SEQUENCE</scope>
    <scope>AMIDATION AT GLY-9</scope>
    <scope>DISULFIDE BOND</scope>
    <source>
        <tissue>Pituitary</tissue>
    </source>
</reference>
<dbReference type="PIR" id="PC2021">
    <property type="entry name" value="PC2021"/>
</dbReference>
<dbReference type="GO" id="GO:0005576">
    <property type="term" value="C:extracellular region"/>
    <property type="evidence" value="ECO:0007669"/>
    <property type="project" value="UniProtKB-SubCell"/>
</dbReference>
<dbReference type="GO" id="GO:0005185">
    <property type="term" value="F:neurohypophyseal hormone activity"/>
    <property type="evidence" value="ECO:0007669"/>
    <property type="project" value="InterPro"/>
</dbReference>
<dbReference type="InterPro" id="IPR022423">
    <property type="entry name" value="Neurohypophysial_hormone_CS"/>
</dbReference>
<dbReference type="PROSITE" id="PS00264">
    <property type="entry name" value="NEUROHYPOPHYS_HORM"/>
    <property type="match status" value="1"/>
</dbReference>
<name>OXYT_EISFE</name>
<feature type="peptide" id="PRO_0000044097" description="Annetocin">
    <location>
        <begin position="1"/>
        <end position="9"/>
    </location>
</feature>
<feature type="modified residue" description="Glycine amide" evidence="1">
    <location>
        <position position="9"/>
    </location>
</feature>
<feature type="disulfide bond" evidence="1">
    <location>
        <begin position="1"/>
        <end position="6"/>
    </location>
</feature>
<accession>P42998</accession>